<dbReference type="EMBL" id="DQ279927">
    <property type="protein sequence ID" value="ABB89284.1"/>
    <property type="molecule type" value="Genomic_DNA"/>
</dbReference>
<dbReference type="RefSeq" id="YP_001129505.1">
    <property type="nucleotide sequence ID" value="NC_009334.1"/>
</dbReference>
<dbReference type="KEGG" id="vg:5176164"/>
<dbReference type="Proteomes" id="UP000007639">
    <property type="component" value="Genome"/>
</dbReference>
<dbReference type="InterPro" id="IPR006882">
    <property type="entry name" value="Herpes_Orf11"/>
</dbReference>
<dbReference type="Pfam" id="PF04797">
    <property type="entry name" value="Herpes_ORF11"/>
    <property type="match status" value="1"/>
</dbReference>
<sequence length="469" mass="50584">MALQTDTHAWRVEIGTRGLMFSNCVPLHLPEGQYHKLRLPVSAYEALAVARYGLVGSLWEVPAVNSALQCLAAAAPCKDVKIYPSCIFQVHAPMFVTIKTSLRCLNPHDLCLCLICVGAAILDIPLLCAPRDGAGARAAEGQAAAAQGGKLRVWGRLSPSSPISLSLAFPYAGPPPVAWYRHSIKLTRSEGVGIGKDCAQDHACPVPPQGHASSAADQAGVPERGRKRAHEGPGAGEAASAGRGDVALSQSRALLWRGLGWDTGRGRLAPGLAMSRDAASGSVHLDIQVDRAEEGWVCDVLLEPGPPTAREGCFLSMDPGLVTLKDAWTLFPLHPEHDAVVPPKEEIHVMAQGHLQGGTPSLWGFTFQEAACDQWVLRPRVWTAHSPIKMTVYNCGHKPLHIGPSTRLGLALFWPAERSDNLDAGRIFYQLTSGELYWGRTVARPPTLTLPVDELRPWPKLTPEEPMQH</sequence>
<reference key="1">
    <citation type="journal article" date="2006" name="Virology">
        <title>The genome of Epstein-Barr virus type 2 strain AG876.</title>
        <authorList>
            <person name="Dolan A."/>
            <person name="Addison C."/>
            <person name="Gatherer D."/>
            <person name="Davison A.J."/>
            <person name="McGeoch D.J."/>
        </authorList>
    </citation>
    <scope>NUCLEOTIDE SEQUENCE [LARGE SCALE GENOMIC DNA]</scope>
    <source>
        <strain>Raji</strain>
    </source>
</reference>
<evidence type="ECO:0000256" key="1">
    <source>
        <dbReference type="SAM" id="MobiDB-lite"/>
    </source>
</evidence>
<evidence type="ECO:0000305" key="2"/>
<gene>
    <name type="primary">LF1</name>
</gene>
<accession>Q1HVC3</accession>
<keyword id="KW-1185">Reference proteome</keyword>
<proteinExistence type="inferred from homology"/>
<protein>
    <recommendedName>
        <fullName>Uncharacterized LF1 protein</fullName>
    </recommendedName>
</protein>
<feature type="chain" id="PRO_0000382449" description="Uncharacterized LF1 protein">
    <location>
        <begin position="1"/>
        <end position="469"/>
    </location>
</feature>
<feature type="region of interest" description="Disordered" evidence="1">
    <location>
        <begin position="203"/>
        <end position="244"/>
    </location>
</feature>
<organism>
    <name type="scientific">Epstein-Barr virus (strain AG876)</name>
    <name type="common">HHV-4</name>
    <name type="synonym">Human herpesvirus 4</name>
    <dbReference type="NCBI Taxonomy" id="82830"/>
    <lineage>
        <taxon>Viruses</taxon>
        <taxon>Duplodnaviria</taxon>
        <taxon>Heunggongvirae</taxon>
        <taxon>Peploviricota</taxon>
        <taxon>Herviviricetes</taxon>
        <taxon>Herpesvirales</taxon>
        <taxon>Orthoherpesviridae</taxon>
        <taxon>Gammaherpesvirinae</taxon>
        <taxon>Lymphocryptovirus</taxon>
        <taxon>Lymphocryptovirus humangamma4</taxon>
        <taxon>Epstein-Barr virus (strain GD1)</taxon>
    </lineage>
</organism>
<organismHost>
    <name type="scientific">Homo sapiens</name>
    <name type="common">Human</name>
    <dbReference type="NCBI Taxonomy" id="9606"/>
</organismHost>
<name>LF1_EBVA8</name>
<comment type="miscellaneous">
    <text>LF1 is absent in strain B95-8.</text>
</comment>
<comment type="similarity">
    <text evidence="2">Belongs to the epstein-barr virus LF1 family.</text>
</comment>